<organism>
    <name type="scientific">Rickettsia conorii (strain ATCC VR-613 / Malish 7)</name>
    <dbReference type="NCBI Taxonomy" id="272944"/>
    <lineage>
        <taxon>Bacteria</taxon>
        <taxon>Pseudomonadati</taxon>
        <taxon>Pseudomonadota</taxon>
        <taxon>Alphaproteobacteria</taxon>
        <taxon>Rickettsiales</taxon>
        <taxon>Rickettsiaceae</taxon>
        <taxon>Rickettsieae</taxon>
        <taxon>Rickettsia</taxon>
        <taxon>spotted fever group</taxon>
    </lineage>
</organism>
<name>DHSD_RICCN</name>
<proteinExistence type="inferred from homology"/>
<gene>
    <name type="primary">sdhD</name>
    <name type="ordered locus">RC0169</name>
</gene>
<feature type="chain" id="PRO_0000158677" description="Succinate dehydrogenase hydrophobic membrane anchor subunit">
    <location>
        <begin position="1"/>
        <end position="126"/>
    </location>
</feature>
<feature type="topological domain" description="Cytoplasmic" evidence="1">
    <location>
        <begin position="1"/>
        <end position="24"/>
    </location>
</feature>
<feature type="transmembrane region" description="Helical" evidence="1">
    <location>
        <begin position="25"/>
        <end position="45"/>
    </location>
</feature>
<feature type="topological domain" description="Periplasmic" evidence="1">
    <location>
        <begin position="46"/>
        <end position="68"/>
    </location>
</feature>
<feature type="transmembrane region" description="Helical" evidence="1">
    <location>
        <begin position="69"/>
        <end position="90"/>
    </location>
</feature>
<feature type="topological domain" description="Cytoplasmic" evidence="1">
    <location>
        <begin position="91"/>
        <end position="100"/>
    </location>
</feature>
<feature type="transmembrane region" description="Helical" evidence="1">
    <location>
        <begin position="101"/>
        <end position="124"/>
    </location>
</feature>
<feature type="binding site" description="axial binding residue" evidence="1">
    <location>
        <position position="81"/>
    </location>
    <ligand>
        <name>heme</name>
        <dbReference type="ChEBI" id="CHEBI:30413"/>
        <note>ligand shared with second transmembrane subunit</note>
    </ligand>
    <ligandPart>
        <name>Fe</name>
        <dbReference type="ChEBI" id="CHEBI:18248"/>
    </ligandPart>
</feature>
<feature type="binding site" evidence="1">
    <location>
        <position position="93"/>
    </location>
    <ligand>
        <name>a ubiquinone</name>
        <dbReference type="ChEBI" id="CHEBI:16389"/>
    </ligand>
</feature>
<reference key="1">
    <citation type="journal article" date="2001" name="Science">
        <title>Mechanisms of evolution in Rickettsia conorii and R. prowazekii.</title>
        <authorList>
            <person name="Ogata H."/>
            <person name="Audic S."/>
            <person name="Renesto-Audiffren P."/>
            <person name="Fournier P.-E."/>
            <person name="Barbe V."/>
            <person name="Samson D."/>
            <person name="Roux V."/>
            <person name="Cossart P."/>
            <person name="Weissenbach J."/>
            <person name="Claverie J.-M."/>
            <person name="Raoult D."/>
        </authorList>
    </citation>
    <scope>NUCLEOTIDE SEQUENCE [LARGE SCALE GENOMIC DNA]</scope>
    <source>
        <strain>ATCC VR-613 / Malish 7</strain>
    </source>
</reference>
<protein>
    <recommendedName>
        <fullName>Succinate dehydrogenase hydrophobic membrane anchor subunit</fullName>
    </recommendedName>
</protein>
<accession>Q92J98</accession>
<comment type="function">
    <text evidence="1">Membrane-anchoring subunit of succinate dehydrogenase (SDH).</text>
</comment>
<comment type="cofactor">
    <cofactor evidence="1">
        <name>heme</name>
        <dbReference type="ChEBI" id="CHEBI:30413"/>
    </cofactor>
    <text evidence="1">The heme is bound between the two transmembrane subunits.</text>
</comment>
<comment type="pathway">
    <text>Carbohydrate metabolism; tricarboxylic acid cycle.</text>
</comment>
<comment type="subunit">
    <text evidence="1">Part of an enzyme complex containing four subunits: a flavoprotein, an iron-sulfur protein, plus two membrane-anchoring proteins, SdhC and SdhD.</text>
</comment>
<comment type="subcellular location">
    <subcellularLocation>
        <location>Cell inner membrane</location>
        <topology>Multi-pass membrane protein</topology>
    </subcellularLocation>
</comment>
<evidence type="ECO:0000250" key="1"/>
<dbReference type="EMBL" id="AE006914">
    <property type="protein sequence ID" value="AAL02707.1"/>
    <property type="molecule type" value="Genomic_DNA"/>
</dbReference>
<dbReference type="PIR" id="A97721">
    <property type="entry name" value="A97721"/>
</dbReference>
<dbReference type="RefSeq" id="WP_010976844.1">
    <property type="nucleotide sequence ID" value="NC_003103.1"/>
</dbReference>
<dbReference type="SMR" id="Q92J98"/>
<dbReference type="GeneID" id="928022"/>
<dbReference type="KEGG" id="rco:RC0169"/>
<dbReference type="HOGENOM" id="CLU_151315_0_2_5"/>
<dbReference type="UniPathway" id="UPA00223"/>
<dbReference type="Proteomes" id="UP000000816">
    <property type="component" value="Chromosome"/>
</dbReference>
<dbReference type="GO" id="GO:0005886">
    <property type="term" value="C:plasma membrane"/>
    <property type="evidence" value="ECO:0007669"/>
    <property type="project" value="UniProtKB-SubCell"/>
</dbReference>
<dbReference type="GO" id="GO:0009055">
    <property type="term" value="F:electron transfer activity"/>
    <property type="evidence" value="ECO:0007669"/>
    <property type="project" value="TreeGrafter"/>
</dbReference>
<dbReference type="GO" id="GO:0020037">
    <property type="term" value="F:heme binding"/>
    <property type="evidence" value="ECO:0007669"/>
    <property type="project" value="InterPro"/>
</dbReference>
<dbReference type="GO" id="GO:0046872">
    <property type="term" value="F:metal ion binding"/>
    <property type="evidence" value="ECO:0007669"/>
    <property type="project" value="UniProtKB-KW"/>
</dbReference>
<dbReference type="GO" id="GO:0017004">
    <property type="term" value="P:cytochrome complex assembly"/>
    <property type="evidence" value="ECO:0007669"/>
    <property type="project" value="TreeGrafter"/>
</dbReference>
<dbReference type="GO" id="GO:0006099">
    <property type="term" value="P:tricarboxylic acid cycle"/>
    <property type="evidence" value="ECO:0007669"/>
    <property type="project" value="UniProtKB-UniPathway"/>
</dbReference>
<dbReference type="CDD" id="cd03495">
    <property type="entry name" value="SQR_TypeC_SdhD_like"/>
    <property type="match status" value="1"/>
</dbReference>
<dbReference type="Gene3D" id="1.20.1300.10">
    <property type="entry name" value="Fumarate reductase/succinate dehydrogenase, transmembrane subunit"/>
    <property type="match status" value="1"/>
</dbReference>
<dbReference type="InterPro" id="IPR034804">
    <property type="entry name" value="SQR/QFR_C/D"/>
</dbReference>
<dbReference type="InterPro" id="IPR014312">
    <property type="entry name" value="Succ_DH_anchor"/>
</dbReference>
<dbReference type="InterPro" id="IPR000701">
    <property type="entry name" value="SuccDH_FuR_B_TM-su"/>
</dbReference>
<dbReference type="NCBIfam" id="TIGR02968">
    <property type="entry name" value="succ_dehyd_anc"/>
    <property type="match status" value="1"/>
</dbReference>
<dbReference type="PANTHER" id="PTHR38689">
    <property type="entry name" value="SUCCINATE DEHYDROGENASE HYDROPHOBIC MEMBRANE ANCHOR SUBUNIT"/>
    <property type="match status" value="1"/>
</dbReference>
<dbReference type="PANTHER" id="PTHR38689:SF1">
    <property type="entry name" value="SUCCINATE DEHYDROGENASE HYDROPHOBIC MEMBRANE ANCHOR SUBUNIT"/>
    <property type="match status" value="1"/>
</dbReference>
<dbReference type="Pfam" id="PF01127">
    <property type="entry name" value="Sdh_cyt"/>
    <property type="match status" value="1"/>
</dbReference>
<dbReference type="SUPFAM" id="SSF81343">
    <property type="entry name" value="Fumarate reductase respiratory complex transmembrane subunits"/>
    <property type="match status" value="1"/>
</dbReference>
<keyword id="KW-0997">Cell inner membrane</keyword>
<keyword id="KW-1003">Cell membrane</keyword>
<keyword id="KW-0249">Electron transport</keyword>
<keyword id="KW-0349">Heme</keyword>
<keyword id="KW-0408">Iron</keyword>
<keyword id="KW-0472">Membrane</keyword>
<keyword id="KW-0479">Metal-binding</keyword>
<keyword id="KW-0812">Transmembrane</keyword>
<keyword id="KW-1133">Transmembrane helix</keyword>
<keyword id="KW-0813">Transport</keyword>
<keyword id="KW-0816">Tricarboxylic acid cycle</keyword>
<sequence>MVYDFKAEIVKAKNSGSAKSGSHHWLLQRVTGIILALCSVWLIYFTLTNKNNDINIIMLWELKKPFNVVALLITVVISLYHAMLGMRVVIEDYISYHKLRNTLIIIVQLFCIVTIVAFVVALFYKG</sequence>